<gene>
    <name evidence="1" type="primary">rbcL</name>
</gene>
<sequence length="475" mass="52583">MIFAKKTEAAGFKAGVKDYRLTYYTPDYKVKDTDILAAFRVTPQPGVPPEEAAAAVAAESSTGTWTTVWTDGLTSLDRYKGRCYFIETFEGQKDNQFICYIAYPLDLFEEGSVTNLFTSIVGNVFGFKALRAIRLEDLRIPVAYVKTFEGPPHGIQVERDKLNKYGRALLGCTIKPKLGLSAKNYGRAVYEGLRGGLDFTKDDENVNSQPFMRWRDRFLFVAEAIYKSQSETGEVKGHYLNATAGTSEEVLKRAECAKELGVPIVMHDFLTGGFTTNTSLSKYCRESGLLLHIHRAMHAVVDRQKNHGIHFRVLAKTLRLSGGDHLHSGTVVGKLEGDKDVTLGFVDLMRDDYVELDRSRGIYFTQDWASMGGVIPVASGGIHVWHMPALVDIFGDDACLQFGGGTLGHPWGNAPGAVANRVALEACIKIRNQGQNVLREGGNALREATKWSPELAAACEVWKEIKFEFDTIDTI</sequence>
<organism>
    <name type="scientific">Bigelowiella natans</name>
    <name type="common">Pedinomonas minutissima</name>
    <name type="synonym">Chlorarachnion sp. (strain CCMP621)</name>
    <dbReference type="NCBI Taxonomy" id="227086"/>
    <lineage>
        <taxon>Eukaryota</taxon>
        <taxon>Sar</taxon>
        <taxon>Rhizaria</taxon>
        <taxon>Cercozoa</taxon>
        <taxon>Chlorarachniophyceae</taxon>
        <taxon>Bigelowiella</taxon>
    </lineage>
</organism>
<reference key="1">
    <citation type="journal article" date="2007" name="Mol. Biol. Evol.">
        <title>The complete chloroplast genome of the chlorarachniophyte Bigelowiella natans: evidence for independent origins of chlorarachniophyte and euglenid secondary endosymbionts.</title>
        <authorList>
            <person name="Rogers M.B."/>
            <person name="Gilson P.R."/>
            <person name="Su V."/>
            <person name="McFadden G.I."/>
            <person name="Keeling P.J."/>
        </authorList>
    </citation>
    <scope>NUCLEOTIDE SEQUENCE [LARGE SCALE GENOMIC DNA]</scope>
</reference>
<keyword id="KW-0113">Calvin cycle</keyword>
<keyword id="KW-0120">Carbon dioxide fixation</keyword>
<keyword id="KW-0150">Chloroplast</keyword>
<keyword id="KW-0456">Lyase</keyword>
<keyword id="KW-0460">Magnesium</keyword>
<keyword id="KW-0479">Metal-binding</keyword>
<keyword id="KW-0503">Monooxygenase</keyword>
<keyword id="KW-0560">Oxidoreductase</keyword>
<keyword id="KW-0602">Photosynthesis</keyword>
<keyword id="KW-0934">Plastid</keyword>
<proteinExistence type="inferred from homology"/>
<dbReference type="EC" id="4.1.1.39" evidence="1"/>
<dbReference type="EMBL" id="DQ851108">
    <property type="protein sequence ID" value="ABG91433.1"/>
    <property type="molecule type" value="Genomic_DNA"/>
</dbReference>
<dbReference type="RefSeq" id="YP_778601.1">
    <property type="nucleotide sequence ID" value="NC_008408.1"/>
</dbReference>
<dbReference type="SMR" id="Q06J26"/>
<dbReference type="GeneID" id="4353018"/>
<dbReference type="GO" id="GO:0009507">
    <property type="term" value="C:chloroplast"/>
    <property type="evidence" value="ECO:0007669"/>
    <property type="project" value="UniProtKB-SubCell"/>
</dbReference>
<dbReference type="GO" id="GO:0000287">
    <property type="term" value="F:magnesium ion binding"/>
    <property type="evidence" value="ECO:0007669"/>
    <property type="project" value="UniProtKB-UniRule"/>
</dbReference>
<dbReference type="GO" id="GO:0004497">
    <property type="term" value="F:monooxygenase activity"/>
    <property type="evidence" value="ECO:0007669"/>
    <property type="project" value="UniProtKB-KW"/>
</dbReference>
<dbReference type="GO" id="GO:0016984">
    <property type="term" value="F:ribulose-bisphosphate carboxylase activity"/>
    <property type="evidence" value="ECO:0007669"/>
    <property type="project" value="UniProtKB-UniRule"/>
</dbReference>
<dbReference type="GO" id="GO:0019253">
    <property type="term" value="P:reductive pentose-phosphate cycle"/>
    <property type="evidence" value="ECO:0007669"/>
    <property type="project" value="UniProtKB-UniRule"/>
</dbReference>
<dbReference type="CDD" id="cd08212">
    <property type="entry name" value="RuBisCO_large_I"/>
    <property type="match status" value="1"/>
</dbReference>
<dbReference type="Gene3D" id="3.20.20.110">
    <property type="entry name" value="Ribulose bisphosphate carboxylase, large subunit, C-terminal domain"/>
    <property type="match status" value="1"/>
</dbReference>
<dbReference type="Gene3D" id="3.30.70.150">
    <property type="entry name" value="RuBisCO large subunit, N-terminal domain"/>
    <property type="match status" value="1"/>
</dbReference>
<dbReference type="HAMAP" id="MF_01338">
    <property type="entry name" value="RuBisCO_L_type1"/>
    <property type="match status" value="1"/>
</dbReference>
<dbReference type="InterPro" id="IPR033966">
    <property type="entry name" value="RuBisCO"/>
</dbReference>
<dbReference type="InterPro" id="IPR020878">
    <property type="entry name" value="RuBisCo_large_chain_AS"/>
</dbReference>
<dbReference type="InterPro" id="IPR000685">
    <property type="entry name" value="RuBisCO_lsu_C"/>
</dbReference>
<dbReference type="InterPro" id="IPR036376">
    <property type="entry name" value="RuBisCO_lsu_C_sf"/>
</dbReference>
<dbReference type="InterPro" id="IPR017443">
    <property type="entry name" value="RuBisCO_lsu_fd_N"/>
</dbReference>
<dbReference type="InterPro" id="IPR036422">
    <property type="entry name" value="RuBisCO_lsu_N_sf"/>
</dbReference>
<dbReference type="InterPro" id="IPR020888">
    <property type="entry name" value="RuBisCO_lsuI"/>
</dbReference>
<dbReference type="NCBIfam" id="NF003252">
    <property type="entry name" value="PRK04208.1"/>
    <property type="match status" value="1"/>
</dbReference>
<dbReference type="PANTHER" id="PTHR42704">
    <property type="entry name" value="RIBULOSE BISPHOSPHATE CARBOXYLASE"/>
    <property type="match status" value="1"/>
</dbReference>
<dbReference type="PANTHER" id="PTHR42704:SF17">
    <property type="entry name" value="RIBULOSE BISPHOSPHATE CARBOXYLASE LARGE CHAIN"/>
    <property type="match status" value="1"/>
</dbReference>
<dbReference type="Pfam" id="PF00016">
    <property type="entry name" value="RuBisCO_large"/>
    <property type="match status" value="1"/>
</dbReference>
<dbReference type="Pfam" id="PF02788">
    <property type="entry name" value="RuBisCO_large_N"/>
    <property type="match status" value="1"/>
</dbReference>
<dbReference type="SFLD" id="SFLDG01052">
    <property type="entry name" value="RuBisCO"/>
    <property type="match status" value="1"/>
</dbReference>
<dbReference type="SFLD" id="SFLDS00014">
    <property type="entry name" value="RuBisCO"/>
    <property type="match status" value="1"/>
</dbReference>
<dbReference type="SFLD" id="SFLDG00301">
    <property type="entry name" value="RuBisCO-like_proteins"/>
    <property type="match status" value="1"/>
</dbReference>
<dbReference type="SUPFAM" id="SSF51649">
    <property type="entry name" value="RuBisCo, C-terminal domain"/>
    <property type="match status" value="1"/>
</dbReference>
<dbReference type="SUPFAM" id="SSF54966">
    <property type="entry name" value="RuBisCO, large subunit, small (N-terminal) domain"/>
    <property type="match status" value="1"/>
</dbReference>
<dbReference type="PROSITE" id="PS00157">
    <property type="entry name" value="RUBISCO_LARGE"/>
    <property type="match status" value="1"/>
</dbReference>
<feature type="chain" id="PRO_0000296333" description="Ribulose bisphosphate carboxylase large chain">
    <location>
        <begin position="1"/>
        <end position="475"/>
    </location>
</feature>
<feature type="active site" description="Proton acceptor" evidence="1">
    <location>
        <position position="175"/>
    </location>
</feature>
<feature type="active site" description="Proton acceptor" evidence="1">
    <location>
        <position position="294"/>
    </location>
</feature>
<feature type="binding site" description="in homodimeric partner" evidence="1">
    <location>
        <position position="123"/>
    </location>
    <ligand>
        <name>substrate</name>
    </ligand>
</feature>
<feature type="binding site" evidence="1">
    <location>
        <position position="173"/>
    </location>
    <ligand>
        <name>substrate</name>
    </ligand>
</feature>
<feature type="binding site" evidence="1">
    <location>
        <position position="177"/>
    </location>
    <ligand>
        <name>substrate</name>
    </ligand>
</feature>
<feature type="binding site" description="via carbamate group" evidence="1">
    <location>
        <position position="201"/>
    </location>
    <ligand>
        <name>Mg(2+)</name>
        <dbReference type="ChEBI" id="CHEBI:18420"/>
    </ligand>
</feature>
<feature type="binding site" evidence="1">
    <location>
        <position position="203"/>
    </location>
    <ligand>
        <name>Mg(2+)</name>
        <dbReference type="ChEBI" id="CHEBI:18420"/>
    </ligand>
</feature>
<feature type="binding site" evidence="1">
    <location>
        <position position="204"/>
    </location>
    <ligand>
        <name>Mg(2+)</name>
        <dbReference type="ChEBI" id="CHEBI:18420"/>
    </ligand>
</feature>
<feature type="binding site" evidence="1">
    <location>
        <position position="295"/>
    </location>
    <ligand>
        <name>substrate</name>
    </ligand>
</feature>
<feature type="binding site" evidence="1">
    <location>
        <position position="327"/>
    </location>
    <ligand>
        <name>substrate</name>
    </ligand>
</feature>
<feature type="binding site" evidence="1">
    <location>
        <position position="379"/>
    </location>
    <ligand>
        <name>substrate</name>
    </ligand>
</feature>
<feature type="site" description="Transition state stabilizer" evidence="1">
    <location>
        <position position="334"/>
    </location>
</feature>
<feature type="modified residue" description="N6-carboxylysine" evidence="1">
    <location>
        <position position="201"/>
    </location>
</feature>
<evidence type="ECO:0000255" key="1">
    <source>
        <dbReference type="HAMAP-Rule" id="MF_01338"/>
    </source>
</evidence>
<geneLocation type="chloroplast"/>
<name>RBL_BIGNA</name>
<comment type="function">
    <text evidence="1">RuBisCO catalyzes two reactions: the carboxylation of D-ribulose 1,5-bisphosphate, the primary event in carbon dioxide fixation, as well as the oxidative fragmentation of the pentose substrate in the photorespiration process. Both reactions occur simultaneously and in competition at the same active site.</text>
</comment>
<comment type="catalytic activity">
    <reaction evidence="1">
        <text>2 (2R)-3-phosphoglycerate + 2 H(+) = D-ribulose 1,5-bisphosphate + CO2 + H2O</text>
        <dbReference type="Rhea" id="RHEA:23124"/>
        <dbReference type="ChEBI" id="CHEBI:15377"/>
        <dbReference type="ChEBI" id="CHEBI:15378"/>
        <dbReference type="ChEBI" id="CHEBI:16526"/>
        <dbReference type="ChEBI" id="CHEBI:57870"/>
        <dbReference type="ChEBI" id="CHEBI:58272"/>
        <dbReference type="EC" id="4.1.1.39"/>
    </reaction>
</comment>
<comment type="catalytic activity">
    <reaction evidence="1">
        <text>D-ribulose 1,5-bisphosphate + O2 = 2-phosphoglycolate + (2R)-3-phosphoglycerate + 2 H(+)</text>
        <dbReference type="Rhea" id="RHEA:36631"/>
        <dbReference type="ChEBI" id="CHEBI:15378"/>
        <dbReference type="ChEBI" id="CHEBI:15379"/>
        <dbReference type="ChEBI" id="CHEBI:57870"/>
        <dbReference type="ChEBI" id="CHEBI:58033"/>
        <dbReference type="ChEBI" id="CHEBI:58272"/>
    </reaction>
</comment>
<comment type="cofactor">
    <cofactor evidence="1">
        <name>Mg(2+)</name>
        <dbReference type="ChEBI" id="CHEBI:18420"/>
    </cofactor>
    <text evidence="1">Binds 1 Mg(2+) ion per subunit.</text>
</comment>
<comment type="subunit">
    <text evidence="1">Heterohexadecamer of 8 large chains and 8 small chains.</text>
</comment>
<comment type="subcellular location">
    <subcellularLocation>
        <location>Plastid</location>
        <location>Chloroplast</location>
    </subcellularLocation>
</comment>
<comment type="miscellaneous">
    <text evidence="1">The basic functional RuBisCO is composed of a large chain homodimer in a 'head-to-tail' conformation. In form I RuBisCO this homodimer is arranged in a barrel-like tetramer with the small subunits forming a tetrameric 'cap' on each end of the 'barrel'.</text>
</comment>
<comment type="similarity">
    <text evidence="1">Belongs to the RuBisCO large chain family. Type I subfamily.</text>
</comment>
<accession>Q06J26</accession>
<protein>
    <recommendedName>
        <fullName evidence="1">Ribulose bisphosphate carboxylase large chain</fullName>
        <shortName evidence="1">RuBisCO large subunit</shortName>
        <ecNumber evidence="1">4.1.1.39</ecNumber>
    </recommendedName>
</protein>